<feature type="chain" id="PRO_1000062429" description="Putative septation protein SpoVG">
    <location>
        <begin position="1"/>
        <end position="100"/>
    </location>
</feature>
<name>SP5G_CLONN</name>
<accession>A0PXK7</accession>
<sequence>MQITDVRIRKISAEGKMKAIVSVTFDNEFVVHDIKVIEGQNGLFIAMPSRKTPTGEFKDIAHPINTETRQKIQKAILDEYEVVKNETTNNENGEEITSED</sequence>
<organism>
    <name type="scientific">Clostridium novyi (strain NT)</name>
    <dbReference type="NCBI Taxonomy" id="386415"/>
    <lineage>
        <taxon>Bacteria</taxon>
        <taxon>Bacillati</taxon>
        <taxon>Bacillota</taxon>
        <taxon>Clostridia</taxon>
        <taxon>Eubacteriales</taxon>
        <taxon>Clostridiaceae</taxon>
        <taxon>Clostridium</taxon>
    </lineage>
</organism>
<proteinExistence type="inferred from homology"/>
<keyword id="KW-0131">Cell cycle</keyword>
<keyword id="KW-0132">Cell division</keyword>
<keyword id="KW-1185">Reference proteome</keyword>
<keyword id="KW-0717">Septation</keyword>
<dbReference type="EMBL" id="CP000382">
    <property type="protein sequence ID" value="ABK61337.1"/>
    <property type="molecule type" value="Genomic_DNA"/>
</dbReference>
<dbReference type="RefSeq" id="WP_011721130.1">
    <property type="nucleotide sequence ID" value="NC_008593.1"/>
</dbReference>
<dbReference type="SMR" id="A0PXK7"/>
<dbReference type="STRING" id="386415.NT01CX_1013"/>
<dbReference type="KEGG" id="cno:NT01CX_1013"/>
<dbReference type="eggNOG" id="COG2088">
    <property type="taxonomic scope" value="Bacteria"/>
</dbReference>
<dbReference type="HOGENOM" id="CLU_103669_2_1_9"/>
<dbReference type="Proteomes" id="UP000008220">
    <property type="component" value="Chromosome"/>
</dbReference>
<dbReference type="GO" id="GO:0000917">
    <property type="term" value="P:division septum assembly"/>
    <property type="evidence" value="ECO:0007669"/>
    <property type="project" value="UniProtKB-KW"/>
</dbReference>
<dbReference type="GO" id="GO:0030435">
    <property type="term" value="P:sporulation resulting in formation of a cellular spore"/>
    <property type="evidence" value="ECO:0007669"/>
    <property type="project" value="InterPro"/>
</dbReference>
<dbReference type="Gene3D" id="3.30.1120.40">
    <property type="entry name" value="Stage V sporulation protein G"/>
    <property type="match status" value="1"/>
</dbReference>
<dbReference type="HAMAP" id="MF_00819">
    <property type="entry name" value="SpoVG"/>
    <property type="match status" value="1"/>
</dbReference>
<dbReference type="InterPro" id="IPR007170">
    <property type="entry name" value="SpoVG"/>
</dbReference>
<dbReference type="InterPro" id="IPR036751">
    <property type="entry name" value="SpoVG_sf"/>
</dbReference>
<dbReference type="NCBIfam" id="NF009749">
    <property type="entry name" value="PRK13259.1"/>
    <property type="match status" value="1"/>
</dbReference>
<dbReference type="PANTHER" id="PTHR38429">
    <property type="entry name" value="SEPTATION PROTEIN SPOVG-RELATED"/>
    <property type="match status" value="1"/>
</dbReference>
<dbReference type="PANTHER" id="PTHR38429:SF1">
    <property type="entry name" value="SEPTATION PROTEIN SPOVG-RELATED"/>
    <property type="match status" value="1"/>
</dbReference>
<dbReference type="Pfam" id="PF04026">
    <property type="entry name" value="SpoVG"/>
    <property type="match status" value="1"/>
</dbReference>
<dbReference type="SUPFAM" id="SSF160537">
    <property type="entry name" value="SpoVG-like"/>
    <property type="match status" value="1"/>
</dbReference>
<protein>
    <recommendedName>
        <fullName evidence="1">Putative septation protein SpoVG</fullName>
    </recommendedName>
</protein>
<evidence type="ECO:0000255" key="1">
    <source>
        <dbReference type="HAMAP-Rule" id="MF_00819"/>
    </source>
</evidence>
<comment type="function">
    <text evidence="1">Could be involved in septation.</text>
</comment>
<comment type="similarity">
    <text evidence="1">Belongs to the SpoVG family.</text>
</comment>
<reference key="1">
    <citation type="journal article" date="2006" name="Nat. Biotechnol.">
        <title>The genome and transcriptomes of the anti-tumor agent Clostridium novyi-NT.</title>
        <authorList>
            <person name="Bettegowda C."/>
            <person name="Huang X."/>
            <person name="Lin J."/>
            <person name="Cheong I."/>
            <person name="Kohli M."/>
            <person name="Szabo S.A."/>
            <person name="Zhang X."/>
            <person name="Diaz L.A. Jr."/>
            <person name="Velculescu V.E."/>
            <person name="Parmigiani G."/>
            <person name="Kinzler K.W."/>
            <person name="Vogelstein B."/>
            <person name="Zhou S."/>
        </authorList>
    </citation>
    <scope>NUCLEOTIDE SEQUENCE [LARGE SCALE GENOMIC DNA]</scope>
    <source>
        <strain>NT</strain>
    </source>
</reference>
<gene>
    <name evidence="1" type="primary">spoVG</name>
    <name type="ordered locus">NT01CX_1013</name>
</gene>